<dbReference type="EC" id="1.4.1.24"/>
<dbReference type="EMBL" id="L77117">
    <property type="protein sequence ID" value="AAB99252.1"/>
    <property type="molecule type" value="Genomic_DNA"/>
</dbReference>
<dbReference type="PIR" id="H64455">
    <property type="entry name" value="H64455"/>
</dbReference>
<dbReference type="RefSeq" id="WP_010870761.1">
    <property type="nucleotide sequence ID" value="NC_000909.1"/>
</dbReference>
<dbReference type="SMR" id="Q58646"/>
<dbReference type="FunCoup" id="Q58646">
    <property type="interactions" value="9"/>
</dbReference>
<dbReference type="STRING" id="243232.MJ_1249"/>
<dbReference type="PaxDb" id="243232-MJ_1249"/>
<dbReference type="DNASU" id="1452146"/>
<dbReference type="EnsemblBacteria" id="AAB99252">
    <property type="protein sequence ID" value="AAB99252"/>
    <property type="gene ID" value="MJ_1249"/>
</dbReference>
<dbReference type="GeneID" id="1452146"/>
<dbReference type="KEGG" id="mja:MJ_1249"/>
<dbReference type="eggNOG" id="arCOG04353">
    <property type="taxonomic scope" value="Archaea"/>
</dbReference>
<dbReference type="HOGENOM" id="CLU_056379_0_0_2"/>
<dbReference type="InParanoid" id="Q58646"/>
<dbReference type="OrthoDB" id="10265at2157"/>
<dbReference type="PhylomeDB" id="Q58646"/>
<dbReference type="BioCyc" id="MetaCyc:MONOMER-14595"/>
<dbReference type="Proteomes" id="UP000000805">
    <property type="component" value="Chromosome"/>
</dbReference>
<dbReference type="GO" id="GO:0003856">
    <property type="term" value="F:3-dehydroquinate synthase activity"/>
    <property type="evidence" value="ECO:0007669"/>
    <property type="project" value="InterPro"/>
</dbReference>
<dbReference type="GO" id="GO:0102042">
    <property type="term" value="F:dehydroquinate synthase activity"/>
    <property type="evidence" value="ECO:0007669"/>
    <property type="project" value="UniProtKB-EC"/>
</dbReference>
<dbReference type="GO" id="GO:0051287">
    <property type="term" value="F:NAD binding"/>
    <property type="evidence" value="ECO:0007669"/>
    <property type="project" value="UniProtKB-UniRule"/>
</dbReference>
<dbReference type="GO" id="GO:0008652">
    <property type="term" value="P:amino acid biosynthetic process"/>
    <property type="evidence" value="ECO:0007669"/>
    <property type="project" value="UniProtKB-KW"/>
</dbReference>
<dbReference type="GO" id="GO:0009073">
    <property type="term" value="P:aromatic amino acid family biosynthetic process"/>
    <property type="evidence" value="ECO:0007669"/>
    <property type="project" value="UniProtKB-UniRule"/>
</dbReference>
<dbReference type="HAMAP" id="MF_01244">
    <property type="entry name" value="Arch_DHQ_synthase"/>
    <property type="match status" value="1"/>
</dbReference>
<dbReference type="InterPro" id="IPR002812">
    <property type="entry name" value="DHQ_synth"/>
</dbReference>
<dbReference type="NCBIfam" id="NF002624">
    <property type="entry name" value="PRK02290.1-2"/>
    <property type="match status" value="1"/>
</dbReference>
<dbReference type="NCBIfam" id="NF002626">
    <property type="entry name" value="PRK02290.1-4"/>
    <property type="match status" value="1"/>
</dbReference>
<dbReference type="NCBIfam" id="NF002627">
    <property type="entry name" value="PRK02290.1-5"/>
    <property type="match status" value="1"/>
</dbReference>
<dbReference type="PANTHER" id="PTHR33563">
    <property type="match status" value="1"/>
</dbReference>
<dbReference type="PANTHER" id="PTHR33563:SF1">
    <property type="entry name" value="3-DEHYDROQUINATE SYNTHASE"/>
    <property type="match status" value="1"/>
</dbReference>
<dbReference type="Pfam" id="PF01959">
    <property type="entry name" value="DHQS"/>
    <property type="match status" value="1"/>
</dbReference>
<dbReference type="PIRSF" id="PIRSF006655">
    <property type="entry name" value="DHQ_synth"/>
    <property type="match status" value="1"/>
</dbReference>
<reference key="1">
    <citation type="journal article" date="1996" name="Science">
        <title>Complete genome sequence of the methanogenic archaeon, Methanococcus jannaschii.</title>
        <authorList>
            <person name="Bult C.J."/>
            <person name="White O."/>
            <person name="Olsen G.J."/>
            <person name="Zhou L."/>
            <person name="Fleischmann R.D."/>
            <person name="Sutton G.G."/>
            <person name="Blake J.A."/>
            <person name="FitzGerald L.M."/>
            <person name="Clayton R.A."/>
            <person name="Gocayne J.D."/>
            <person name="Kerlavage A.R."/>
            <person name="Dougherty B.A."/>
            <person name="Tomb J.-F."/>
            <person name="Adams M.D."/>
            <person name="Reich C.I."/>
            <person name="Overbeek R."/>
            <person name="Kirkness E.F."/>
            <person name="Weinstock K.G."/>
            <person name="Merrick J.M."/>
            <person name="Glodek A."/>
            <person name="Scott J.L."/>
            <person name="Geoghagen N.S.M."/>
            <person name="Weidman J.F."/>
            <person name="Fuhrmann J.L."/>
            <person name="Nguyen D."/>
            <person name="Utterback T.R."/>
            <person name="Kelley J.M."/>
            <person name="Peterson J.D."/>
            <person name="Sadow P.W."/>
            <person name="Hanna M.C."/>
            <person name="Cotton M.D."/>
            <person name="Roberts K.M."/>
            <person name="Hurst M.A."/>
            <person name="Kaine B.P."/>
            <person name="Borodovsky M."/>
            <person name="Klenk H.-P."/>
            <person name="Fraser C.M."/>
            <person name="Smith H.O."/>
            <person name="Woese C.R."/>
            <person name="Venter J.C."/>
        </authorList>
    </citation>
    <scope>NUCLEOTIDE SEQUENCE [LARGE SCALE GENOMIC DNA]</scope>
    <source>
        <strain>ATCC 43067 / DSM 2661 / JAL-1 / JCM 10045 / NBRC 100440</strain>
    </source>
</reference>
<reference key="2">
    <citation type="journal article" date="2004" name="Biochemistry">
        <title>L-aspartate semialdehyde and a 6-deoxy-5-ketohexose 1-phosphate are the precursors to the aromatic amino acids in Methanocaldococcus jannaschii.</title>
        <authorList>
            <person name="White R.H."/>
        </authorList>
    </citation>
    <scope>FUNCTION AS A DHQ SYNTHASE</scope>
    <scope>CATALYTIC ACTIVITY</scope>
</reference>
<sequence length="361" mass="40260">MKFGWVNVIGDNWEEKKKIVTTALESSIPVVVAEPEDIEKIKELGNIKVASHSLDADIVLVNKNDNIEFLKEAKNLGKETAIYIPIESKEDEEFASEVARFGFVDNIILEGRDWTIIPLENLIADLFHRDVKIVASVNSVDEAKVAYEILEKGTDGVLLNPKNLEDIKELSKLIEEMNKEKVALDVATVTKVEPIGSGDRVCIDTCSLMKIGEGMLIGSYSRALFLVHSETVENPYVATRPFRVNAGPVHAYILCPGNKTKYLSELKAGDKVLIVDKDGNTREAIVGRVKIERRPLVLIEAEYKGDIIRTILQNAETIRLVNEKGEPISVVDLKPGDKVLIKPEEYARHFGMAIKETIIEK</sequence>
<name>DHQS_METJA</name>
<proteinExistence type="evidence at protein level"/>
<protein>
    <recommendedName>
        <fullName>3-dehydroquinate synthase</fullName>
        <shortName>DHQ synthase</shortName>
        <ecNumber>1.4.1.24</ecNumber>
    </recommendedName>
    <alternativeName>
        <fullName>3-dehydroquinate synthase II</fullName>
    </alternativeName>
</protein>
<evidence type="ECO:0000269" key="1">
    <source>
    </source>
</evidence>
<evidence type="ECO:0000305" key="2"/>
<accession>Q58646</accession>
<gene>
    <name type="primary">aroB'</name>
    <name type="ordered locus">MJ1249</name>
</gene>
<feature type="chain" id="PRO_0000058769" description="3-dehydroquinate synthase">
    <location>
        <begin position="1"/>
        <end position="361"/>
    </location>
</feature>
<keyword id="KW-0028">Amino-acid biosynthesis</keyword>
<keyword id="KW-0057">Aromatic amino acid biosynthesis</keyword>
<keyword id="KW-0520">NAD</keyword>
<keyword id="KW-0560">Oxidoreductase</keyword>
<keyword id="KW-1185">Reference proteome</keyword>
<organism>
    <name type="scientific">Methanocaldococcus jannaschii (strain ATCC 43067 / DSM 2661 / JAL-1 / JCM 10045 / NBRC 100440)</name>
    <name type="common">Methanococcus jannaschii</name>
    <dbReference type="NCBI Taxonomy" id="243232"/>
    <lineage>
        <taxon>Archaea</taxon>
        <taxon>Methanobacteriati</taxon>
        <taxon>Methanobacteriota</taxon>
        <taxon>Methanomada group</taxon>
        <taxon>Methanococci</taxon>
        <taxon>Methanococcales</taxon>
        <taxon>Methanocaldococcaceae</taxon>
        <taxon>Methanocaldococcus</taxon>
    </lineage>
</organism>
<comment type="function">
    <text evidence="1">Catalyzes the oxidative deamination and cyclization of 2-amino-3,7-dideoxy-D-threo-hept-6-ulosonic acid (ADH) to yield 3-dehydroquinate (DHQ), which is fed into the canonical shikimic pathway of aromatic amino acid biosynthesis.</text>
</comment>
<comment type="catalytic activity">
    <reaction evidence="1">
        <text>2-amino-2,3,7-trideoxy-D-lyxo-hept-6-ulosonate + NAD(+) + H2O = 3-dehydroquinate + NH4(+) + NADH + H(+)</text>
        <dbReference type="Rhea" id="RHEA:25956"/>
        <dbReference type="ChEBI" id="CHEBI:15377"/>
        <dbReference type="ChEBI" id="CHEBI:15378"/>
        <dbReference type="ChEBI" id="CHEBI:28938"/>
        <dbReference type="ChEBI" id="CHEBI:32364"/>
        <dbReference type="ChEBI" id="CHEBI:57540"/>
        <dbReference type="ChEBI" id="CHEBI:57945"/>
        <dbReference type="ChEBI" id="CHEBI:58859"/>
        <dbReference type="EC" id="1.4.1.24"/>
    </reaction>
</comment>
<comment type="similarity">
    <text evidence="2">Belongs to the archaeal-type DHQ synthase family.</text>
</comment>